<evidence type="ECO:0000255" key="1">
    <source>
        <dbReference type="HAMAP-Rule" id="MF_01393"/>
    </source>
</evidence>
<feature type="chain" id="PRO_0000362319" description="ATP synthase subunit a">
    <location>
        <begin position="1"/>
        <end position="262"/>
    </location>
</feature>
<feature type="transmembrane region" description="Helical" evidence="1">
    <location>
        <begin position="24"/>
        <end position="44"/>
    </location>
</feature>
<feature type="transmembrane region" description="Helical" evidence="1">
    <location>
        <begin position="85"/>
        <end position="105"/>
    </location>
</feature>
<feature type="transmembrane region" description="Helical" evidence="1">
    <location>
        <begin position="129"/>
        <end position="149"/>
    </location>
</feature>
<feature type="transmembrane region" description="Helical" evidence="1">
    <location>
        <begin position="194"/>
        <end position="214"/>
    </location>
</feature>
<feature type="transmembrane region" description="Helical" evidence="1">
    <location>
        <begin position="228"/>
        <end position="248"/>
    </location>
</feature>
<comment type="function">
    <text evidence="1">Key component of the proton channel; it plays a direct role in the translocation of protons across the membrane.</text>
</comment>
<comment type="subunit">
    <text evidence="1">F-type ATPases have 2 components, CF(1) - the catalytic core - and CF(0) - the membrane proton channel. CF(1) has five subunits: alpha(3), beta(3), gamma(1), delta(1), epsilon(1). CF(0) has three main subunits: a(1), b(2) and c(9-12). The alpha and beta chains form an alternating ring which encloses part of the gamma chain. CF(1) is attached to CF(0) by a central stalk formed by the gamma and epsilon chains, while a peripheral stalk is formed by the delta and b chains.</text>
</comment>
<comment type="subcellular location">
    <subcellularLocation>
        <location evidence="1">Cell inner membrane</location>
        <topology evidence="1">Multi-pass membrane protein</topology>
    </subcellularLocation>
</comment>
<comment type="similarity">
    <text evidence="1">Belongs to the ATPase A chain family.</text>
</comment>
<protein>
    <recommendedName>
        <fullName evidence="1">ATP synthase subunit a</fullName>
    </recommendedName>
    <alternativeName>
        <fullName evidence="1">ATP synthase F0 sector subunit a</fullName>
    </alternativeName>
    <alternativeName>
        <fullName evidence="1">F-ATPase subunit 6</fullName>
    </alternativeName>
</protein>
<accession>Q7VPP6</accession>
<proteinExistence type="inferred from homology"/>
<keyword id="KW-0066">ATP synthesis</keyword>
<keyword id="KW-0997">Cell inner membrane</keyword>
<keyword id="KW-1003">Cell membrane</keyword>
<keyword id="KW-0138">CF(0)</keyword>
<keyword id="KW-0375">Hydrogen ion transport</keyword>
<keyword id="KW-0406">Ion transport</keyword>
<keyword id="KW-0472">Membrane</keyword>
<keyword id="KW-1185">Reference proteome</keyword>
<keyword id="KW-0812">Transmembrane</keyword>
<keyword id="KW-1133">Transmembrane helix</keyword>
<keyword id="KW-0813">Transport</keyword>
<reference key="1">
    <citation type="submission" date="2003-06" db="EMBL/GenBank/DDBJ databases">
        <title>The complete genome sequence of Haemophilus ducreyi.</title>
        <authorList>
            <person name="Munson R.S. Jr."/>
            <person name="Ray W.C."/>
            <person name="Mahairas G."/>
            <person name="Sabo P."/>
            <person name="Mungur R."/>
            <person name="Johnson L."/>
            <person name="Nguyen D."/>
            <person name="Wang J."/>
            <person name="Forst C."/>
            <person name="Hood L."/>
        </authorList>
    </citation>
    <scope>NUCLEOTIDE SEQUENCE [LARGE SCALE GENOMIC DNA]</scope>
    <source>
        <strain>35000HP / ATCC 700724</strain>
    </source>
</reference>
<name>ATP6_HAEDU</name>
<dbReference type="EMBL" id="AE017143">
    <property type="protein sequence ID" value="AAP95028.1"/>
    <property type="molecule type" value="Genomic_DNA"/>
</dbReference>
<dbReference type="RefSeq" id="WP_010944082.1">
    <property type="nucleotide sequence ID" value="NC_002940.2"/>
</dbReference>
<dbReference type="SMR" id="Q7VPP6"/>
<dbReference type="STRING" id="233412.HD_0004"/>
<dbReference type="KEGG" id="hdu:HD_0004"/>
<dbReference type="eggNOG" id="COG0356">
    <property type="taxonomic scope" value="Bacteria"/>
</dbReference>
<dbReference type="HOGENOM" id="CLU_041018_1_0_6"/>
<dbReference type="OrthoDB" id="9789241at2"/>
<dbReference type="Proteomes" id="UP000001022">
    <property type="component" value="Chromosome"/>
</dbReference>
<dbReference type="GO" id="GO:0005886">
    <property type="term" value="C:plasma membrane"/>
    <property type="evidence" value="ECO:0007669"/>
    <property type="project" value="UniProtKB-SubCell"/>
</dbReference>
<dbReference type="GO" id="GO:0045259">
    <property type="term" value="C:proton-transporting ATP synthase complex"/>
    <property type="evidence" value="ECO:0007669"/>
    <property type="project" value="UniProtKB-KW"/>
</dbReference>
<dbReference type="GO" id="GO:0046933">
    <property type="term" value="F:proton-transporting ATP synthase activity, rotational mechanism"/>
    <property type="evidence" value="ECO:0007669"/>
    <property type="project" value="UniProtKB-UniRule"/>
</dbReference>
<dbReference type="GO" id="GO:0042777">
    <property type="term" value="P:proton motive force-driven plasma membrane ATP synthesis"/>
    <property type="evidence" value="ECO:0007669"/>
    <property type="project" value="TreeGrafter"/>
</dbReference>
<dbReference type="CDD" id="cd00310">
    <property type="entry name" value="ATP-synt_Fo_a_6"/>
    <property type="match status" value="1"/>
</dbReference>
<dbReference type="FunFam" id="1.20.120.220:FF:000002">
    <property type="entry name" value="ATP synthase subunit a"/>
    <property type="match status" value="1"/>
</dbReference>
<dbReference type="Gene3D" id="1.20.120.220">
    <property type="entry name" value="ATP synthase, F0 complex, subunit A"/>
    <property type="match status" value="1"/>
</dbReference>
<dbReference type="HAMAP" id="MF_01393">
    <property type="entry name" value="ATP_synth_a_bact"/>
    <property type="match status" value="1"/>
</dbReference>
<dbReference type="InterPro" id="IPR045082">
    <property type="entry name" value="ATP_syn_F0_a_bact/chloroplast"/>
</dbReference>
<dbReference type="InterPro" id="IPR000568">
    <property type="entry name" value="ATP_synth_F0_asu"/>
</dbReference>
<dbReference type="InterPro" id="IPR023011">
    <property type="entry name" value="ATP_synth_F0_asu_AS"/>
</dbReference>
<dbReference type="InterPro" id="IPR035908">
    <property type="entry name" value="F0_ATP_A_sf"/>
</dbReference>
<dbReference type="NCBIfam" id="TIGR01131">
    <property type="entry name" value="ATP_synt_6_or_A"/>
    <property type="match status" value="1"/>
</dbReference>
<dbReference type="NCBIfam" id="NF004477">
    <property type="entry name" value="PRK05815.1-1"/>
    <property type="match status" value="1"/>
</dbReference>
<dbReference type="PANTHER" id="PTHR42823">
    <property type="entry name" value="ATP SYNTHASE SUBUNIT A, CHLOROPLASTIC"/>
    <property type="match status" value="1"/>
</dbReference>
<dbReference type="PANTHER" id="PTHR42823:SF3">
    <property type="entry name" value="ATP SYNTHASE SUBUNIT A, CHLOROPLASTIC"/>
    <property type="match status" value="1"/>
</dbReference>
<dbReference type="Pfam" id="PF00119">
    <property type="entry name" value="ATP-synt_A"/>
    <property type="match status" value="1"/>
</dbReference>
<dbReference type="PRINTS" id="PR00123">
    <property type="entry name" value="ATPASEA"/>
</dbReference>
<dbReference type="SUPFAM" id="SSF81336">
    <property type="entry name" value="F1F0 ATP synthase subunit A"/>
    <property type="match status" value="1"/>
</dbReference>
<dbReference type="PROSITE" id="PS00449">
    <property type="entry name" value="ATPASE_A"/>
    <property type="match status" value="1"/>
</dbReference>
<gene>
    <name evidence="1" type="primary">atpB</name>
    <name type="ordered locus">HD_0004</name>
</gene>
<sequence>MAVNTAEYIGHHLSFLSSGDGFWAVHLDTLFFSLVAGVLFLVVFSRVAKNATTGVPGKLQCLVEMVVEWVDGLVKDNFHGPRHMIAPLALTIFCWVFIMNAIDLVPVDFLPQLANMFGIHYLRAVPTADISATLGMSICVFGLILFYTVKSKGFNGLAKEYTLHPFNHWAFIPVNFILETVTLLAKPISLAFRLFGNMYAGELIFILIAVMYMADNFALQALGIPLHLVWAIFHILVITLQAFIFMMLTIVYLSIAYNKADH</sequence>
<organism>
    <name type="scientific">Haemophilus ducreyi (strain 35000HP / ATCC 700724)</name>
    <dbReference type="NCBI Taxonomy" id="233412"/>
    <lineage>
        <taxon>Bacteria</taxon>
        <taxon>Pseudomonadati</taxon>
        <taxon>Pseudomonadota</taxon>
        <taxon>Gammaproteobacteria</taxon>
        <taxon>Pasteurellales</taxon>
        <taxon>Pasteurellaceae</taxon>
        <taxon>Haemophilus</taxon>
    </lineage>
</organism>